<feature type="initiator methionine" description="Removed">
    <location>
        <position position="1"/>
    </location>
</feature>
<feature type="chain" id="PRO_0000249731" description="Neurocalcin-delta">
    <location>
        <begin position="2"/>
        <end position="193"/>
    </location>
</feature>
<feature type="domain" description="EF-hand 1" evidence="2">
    <location>
        <begin position="40"/>
        <end position="58"/>
    </location>
</feature>
<feature type="domain" description="EF-hand 2" evidence="2">
    <location>
        <begin position="60"/>
        <end position="95"/>
    </location>
</feature>
<feature type="domain" description="EF-hand 3" evidence="2">
    <location>
        <begin position="96"/>
        <end position="131"/>
    </location>
</feature>
<feature type="domain" description="EF-hand 4" evidence="2">
    <location>
        <begin position="144"/>
        <end position="179"/>
    </location>
</feature>
<feature type="binding site" evidence="2">
    <location>
        <position position="73"/>
    </location>
    <ligand>
        <name>Ca(2+)</name>
        <dbReference type="ChEBI" id="CHEBI:29108"/>
        <label>1</label>
    </ligand>
</feature>
<feature type="binding site" evidence="2">
    <location>
        <position position="75"/>
    </location>
    <ligand>
        <name>Ca(2+)</name>
        <dbReference type="ChEBI" id="CHEBI:29108"/>
        <label>1</label>
    </ligand>
</feature>
<feature type="binding site" evidence="2">
    <location>
        <position position="77"/>
    </location>
    <ligand>
        <name>Ca(2+)</name>
        <dbReference type="ChEBI" id="CHEBI:29108"/>
        <label>1</label>
    </ligand>
</feature>
<feature type="binding site" evidence="2">
    <location>
        <position position="79"/>
    </location>
    <ligand>
        <name>Ca(2+)</name>
        <dbReference type="ChEBI" id="CHEBI:29108"/>
        <label>1</label>
    </ligand>
</feature>
<feature type="binding site" evidence="2">
    <location>
        <position position="84"/>
    </location>
    <ligand>
        <name>Ca(2+)</name>
        <dbReference type="ChEBI" id="CHEBI:29108"/>
        <label>1</label>
    </ligand>
</feature>
<feature type="binding site" evidence="2">
    <location>
        <position position="109"/>
    </location>
    <ligand>
        <name>Ca(2+)</name>
        <dbReference type="ChEBI" id="CHEBI:29108"/>
        <label>2</label>
    </ligand>
</feature>
<feature type="binding site" evidence="2">
    <location>
        <position position="111"/>
    </location>
    <ligand>
        <name>Ca(2+)</name>
        <dbReference type="ChEBI" id="CHEBI:29108"/>
        <label>2</label>
    </ligand>
</feature>
<feature type="binding site" evidence="2">
    <location>
        <position position="113"/>
    </location>
    <ligand>
        <name>Ca(2+)</name>
        <dbReference type="ChEBI" id="CHEBI:29108"/>
        <label>2</label>
    </ligand>
</feature>
<feature type="binding site" evidence="2">
    <location>
        <position position="115"/>
    </location>
    <ligand>
        <name>Ca(2+)</name>
        <dbReference type="ChEBI" id="CHEBI:29108"/>
        <label>2</label>
    </ligand>
</feature>
<feature type="binding site" evidence="2">
    <location>
        <position position="120"/>
    </location>
    <ligand>
        <name>Ca(2+)</name>
        <dbReference type="ChEBI" id="CHEBI:29108"/>
        <label>2</label>
    </ligand>
</feature>
<feature type="binding site" evidence="2">
    <location>
        <position position="157"/>
    </location>
    <ligand>
        <name>Ca(2+)</name>
        <dbReference type="ChEBI" id="CHEBI:29108"/>
        <label>3</label>
    </ligand>
</feature>
<feature type="binding site" evidence="2">
    <location>
        <position position="159"/>
    </location>
    <ligand>
        <name>Ca(2+)</name>
        <dbReference type="ChEBI" id="CHEBI:29108"/>
        <label>3</label>
    </ligand>
</feature>
<feature type="binding site" evidence="2">
    <location>
        <position position="161"/>
    </location>
    <ligand>
        <name>Ca(2+)</name>
        <dbReference type="ChEBI" id="CHEBI:29108"/>
        <label>3</label>
    </ligand>
</feature>
<feature type="binding site" evidence="2">
    <location>
        <position position="163"/>
    </location>
    <ligand>
        <name>Ca(2+)</name>
        <dbReference type="ChEBI" id="CHEBI:29108"/>
        <label>3</label>
    </ligand>
</feature>
<feature type="binding site" evidence="2">
    <location>
        <position position="168"/>
    </location>
    <ligand>
        <name>Ca(2+)</name>
        <dbReference type="ChEBI" id="CHEBI:29108"/>
        <label>3</label>
    </ligand>
</feature>
<feature type="lipid moiety-binding region" description="N-myristoyl glycine" evidence="1">
    <location>
        <position position="2"/>
    </location>
</feature>
<accession>Q4R4N4</accession>
<proteinExistence type="evidence at transcript level"/>
<keyword id="KW-0106">Calcium</keyword>
<keyword id="KW-0449">Lipoprotein</keyword>
<keyword id="KW-0479">Metal-binding</keyword>
<keyword id="KW-0519">Myristate</keyword>
<keyword id="KW-1185">Reference proteome</keyword>
<keyword id="KW-0677">Repeat</keyword>
<evidence type="ECO:0000250" key="1"/>
<evidence type="ECO:0000255" key="2">
    <source>
        <dbReference type="PROSITE-ProRule" id="PRU00448"/>
    </source>
</evidence>
<evidence type="ECO:0000305" key="3"/>
<comment type="function">
    <text evidence="1">May be involved in the calcium-dependent regulation of rhodopsin phosphorylation. Binds three calcium ions (By similarity).</text>
</comment>
<comment type="similarity">
    <text evidence="3">Belongs to the recoverin family.</text>
</comment>
<protein>
    <recommendedName>
        <fullName>Neurocalcin-delta</fullName>
    </recommendedName>
</protein>
<dbReference type="EMBL" id="AB169860">
    <property type="protein sequence ID" value="BAE01941.1"/>
    <property type="molecule type" value="mRNA"/>
</dbReference>
<dbReference type="RefSeq" id="NP_001271504.1">
    <property type="nucleotide sequence ID" value="NM_001284575.1"/>
</dbReference>
<dbReference type="RefSeq" id="XP_005563889.1">
    <property type="nucleotide sequence ID" value="XM_005563832.4"/>
</dbReference>
<dbReference type="RefSeq" id="XP_005563890.1">
    <property type="nucleotide sequence ID" value="XM_005563833.2"/>
</dbReference>
<dbReference type="RefSeq" id="XP_015310239.1">
    <property type="nucleotide sequence ID" value="XM_015454753.1"/>
</dbReference>
<dbReference type="RefSeq" id="XP_045255126.1">
    <property type="nucleotide sequence ID" value="XM_045399191.2"/>
</dbReference>
<dbReference type="RefSeq" id="XP_045255127.1">
    <property type="nucleotide sequence ID" value="XM_045399192.2"/>
</dbReference>
<dbReference type="RefSeq" id="XP_045255129.1">
    <property type="nucleotide sequence ID" value="XM_045399194.2"/>
</dbReference>
<dbReference type="RefSeq" id="XP_045255130.1">
    <property type="nucleotide sequence ID" value="XM_045399195.2"/>
</dbReference>
<dbReference type="RefSeq" id="XP_045255133.1">
    <property type="nucleotide sequence ID" value="XM_045399198.2"/>
</dbReference>
<dbReference type="RefSeq" id="XP_065375557.1">
    <property type="nucleotide sequence ID" value="XM_065519485.1"/>
</dbReference>
<dbReference type="RefSeq" id="XP_065375558.1">
    <property type="nucleotide sequence ID" value="XM_065519486.1"/>
</dbReference>
<dbReference type="RefSeq" id="XP_065375559.1">
    <property type="nucleotide sequence ID" value="XM_065519487.1"/>
</dbReference>
<dbReference type="RefSeq" id="XP_065375560.1">
    <property type="nucleotide sequence ID" value="XM_065519488.1"/>
</dbReference>
<dbReference type="RefSeq" id="XP_065375561.1">
    <property type="nucleotide sequence ID" value="XM_065519489.1"/>
</dbReference>
<dbReference type="RefSeq" id="XP_065375562.1">
    <property type="nucleotide sequence ID" value="XM_065519490.1"/>
</dbReference>
<dbReference type="RefSeq" id="XP_065375563.1">
    <property type="nucleotide sequence ID" value="XM_065519491.1"/>
</dbReference>
<dbReference type="SMR" id="Q4R4N4"/>
<dbReference type="STRING" id="9541.ENSMFAP00000031297"/>
<dbReference type="Ensembl" id="ENSMFAT00000082359.1">
    <property type="protein sequence ID" value="ENSMFAP00000054568.1"/>
    <property type="gene ID" value="ENSMFAG00000036726.2"/>
</dbReference>
<dbReference type="GeneID" id="101865366"/>
<dbReference type="CTD" id="83988"/>
<dbReference type="VEuPathDB" id="HostDB:ENSMFAG00000036726"/>
<dbReference type="eggNOG" id="KOG0044">
    <property type="taxonomic scope" value="Eukaryota"/>
</dbReference>
<dbReference type="GeneTree" id="ENSGT00940000158862"/>
<dbReference type="OMA" id="MGCVCMK"/>
<dbReference type="Proteomes" id="UP000233100">
    <property type="component" value="Chromosome 8"/>
</dbReference>
<dbReference type="Bgee" id="ENSMFAG00000036726">
    <property type="expression patterns" value="Expressed in frontal cortex and 12 other cell types or tissues"/>
</dbReference>
<dbReference type="GO" id="GO:0003779">
    <property type="term" value="F:actin binding"/>
    <property type="evidence" value="ECO:0007669"/>
    <property type="project" value="TreeGrafter"/>
</dbReference>
<dbReference type="GO" id="GO:0005509">
    <property type="term" value="F:calcium ion binding"/>
    <property type="evidence" value="ECO:0007669"/>
    <property type="project" value="InterPro"/>
</dbReference>
<dbReference type="GO" id="GO:0015631">
    <property type="term" value="F:tubulin binding"/>
    <property type="evidence" value="ECO:0007669"/>
    <property type="project" value="TreeGrafter"/>
</dbReference>
<dbReference type="GO" id="GO:0019722">
    <property type="term" value="P:calcium-mediated signaling"/>
    <property type="evidence" value="ECO:0007669"/>
    <property type="project" value="TreeGrafter"/>
</dbReference>
<dbReference type="CDD" id="cd00051">
    <property type="entry name" value="EFh"/>
    <property type="match status" value="2"/>
</dbReference>
<dbReference type="FunFam" id="1.10.238.10:FF:000009">
    <property type="entry name" value="Visinin-like protein 1"/>
    <property type="match status" value="1"/>
</dbReference>
<dbReference type="Gene3D" id="1.10.238.10">
    <property type="entry name" value="EF-hand"/>
    <property type="match status" value="1"/>
</dbReference>
<dbReference type="InterPro" id="IPR011992">
    <property type="entry name" value="EF-hand-dom_pair"/>
</dbReference>
<dbReference type="InterPro" id="IPR018247">
    <property type="entry name" value="EF_Hand_1_Ca_BS"/>
</dbReference>
<dbReference type="InterPro" id="IPR002048">
    <property type="entry name" value="EF_hand_dom"/>
</dbReference>
<dbReference type="InterPro" id="IPR028846">
    <property type="entry name" value="Recoverin"/>
</dbReference>
<dbReference type="PANTHER" id="PTHR23055">
    <property type="entry name" value="CALCIUM BINDING PROTEINS"/>
    <property type="match status" value="1"/>
</dbReference>
<dbReference type="PANTHER" id="PTHR23055:SF87">
    <property type="entry name" value="NEUROCALCIN-DELTA"/>
    <property type="match status" value="1"/>
</dbReference>
<dbReference type="Pfam" id="PF00036">
    <property type="entry name" value="EF-hand_1"/>
    <property type="match status" value="1"/>
</dbReference>
<dbReference type="Pfam" id="PF13499">
    <property type="entry name" value="EF-hand_7"/>
    <property type="match status" value="1"/>
</dbReference>
<dbReference type="PRINTS" id="PR00450">
    <property type="entry name" value="RECOVERIN"/>
</dbReference>
<dbReference type="SMART" id="SM00054">
    <property type="entry name" value="EFh"/>
    <property type="match status" value="3"/>
</dbReference>
<dbReference type="SUPFAM" id="SSF47473">
    <property type="entry name" value="EF-hand"/>
    <property type="match status" value="1"/>
</dbReference>
<dbReference type="PROSITE" id="PS00018">
    <property type="entry name" value="EF_HAND_1"/>
    <property type="match status" value="3"/>
</dbReference>
<dbReference type="PROSITE" id="PS50222">
    <property type="entry name" value="EF_HAND_2"/>
    <property type="match status" value="4"/>
</dbReference>
<name>NCALD_MACFA</name>
<gene>
    <name type="primary">NCALD</name>
    <name type="ORF">QccE-15702</name>
</gene>
<sequence length="193" mass="22245">MGKQNSKLRPEVMQDLLESTDFTEHEIQEWYKGFLRDCPSGHLSMEEFKKIYGNFFPYGDASKFAEHVFRTFDANGDGTIDFREFIIALSVTSRGKLEQKLKWAFSMYDLDGNGYISKAEMLEIVQAIYKMVSSVMKMPEDESTPEKRTEKIFRQMDTNRDGKLSLEEFIRGAKSDPSIVRLLQCDPSSAGQF</sequence>
<organism>
    <name type="scientific">Macaca fascicularis</name>
    <name type="common">Crab-eating macaque</name>
    <name type="synonym">Cynomolgus monkey</name>
    <dbReference type="NCBI Taxonomy" id="9541"/>
    <lineage>
        <taxon>Eukaryota</taxon>
        <taxon>Metazoa</taxon>
        <taxon>Chordata</taxon>
        <taxon>Craniata</taxon>
        <taxon>Vertebrata</taxon>
        <taxon>Euteleostomi</taxon>
        <taxon>Mammalia</taxon>
        <taxon>Eutheria</taxon>
        <taxon>Euarchontoglires</taxon>
        <taxon>Primates</taxon>
        <taxon>Haplorrhini</taxon>
        <taxon>Catarrhini</taxon>
        <taxon>Cercopithecidae</taxon>
        <taxon>Cercopithecinae</taxon>
        <taxon>Macaca</taxon>
    </lineage>
</organism>
<reference key="1">
    <citation type="submission" date="2005-06" db="EMBL/GenBank/DDBJ databases">
        <title>DNA sequences of macaque genes expressed in brain or testis and its evolutionary implications.</title>
        <authorList>
            <consortium name="International consortium for macaque cDNA sequencing and analysis"/>
        </authorList>
    </citation>
    <scope>NUCLEOTIDE SEQUENCE [LARGE SCALE MRNA]</scope>
    <source>
        <tissue>Brain cortex</tissue>
    </source>
</reference>